<sequence length="227" mass="24392">MSHTHFDLTALPQSARYKLLTATVVPRPIAWVGTRGSGETGKLGFNLAPYSFFGLMGSEPPVVAFAPGDRADGTPKDSALNIGSGGEFTVSLVSAALAAVMNLSATDFPRGMDEAQALGIQLAPGRRVQVPHVAAAPAALECREVQTVSIGRTRIILGEVLGLWLREDAVLDAEKHHVDTAALDLVGRMGGRGTYTHTRDTFELGRLTYAQWQEQWQAREEGDHSEK</sequence>
<dbReference type="EMBL" id="AE000513">
    <property type="protein sequence ID" value="AAF12124.1"/>
    <property type="status" value="ALT_INIT"/>
    <property type="molecule type" value="Genomic_DNA"/>
</dbReference>
<dbReference type="PIR" id="F75254">
    <property type="entry name" value="F75254"/>
</dbReference>
<dbReference type="RefSeq" id="NP_296304.1">
    <property type="nucleotide sequence ID" value="NC_001263.1"/>
</dbReference>
<dbReference type="RefSeq" id="WP_034350872.1">
    <property type="nucleotide sequence ID" value="NC_001263.1"/>
</dbReference>
<dbReference type="SMR" id="Q9RRA9"/>
<dbReference type="FunCoup" id="Q9RRA9">
    <property type="interactions" value="19"/>
</dbReference>
<dbReference type="STRING" id="243230.DR_2585"/>
<dbReference type="PaxDb" id="243230-DR_2585"/>
<dbReference type="EnsemblBacteria" id="AAF12124">
    <property type="protein sequence ID" value="AAF12124"/>
    <property type="gene ID" value="DR_2585"/>
</dbReference>
<dbReference type="GeneID" id="69518838"/>
<dbReference type="KEGG" id="dra:DR_2585"/>
<dbReference type="PATRIC" id="fig|243230.17.peg.2830"/>
<dbReference type="eggNOG" id="COG1853">
    <property type="taxonomic scope" value="Bacteria"/>
</dbReference>
<dbReference type="HOGENOM" id="CLU_059021_3_1_0"/>
<dbReference type="InParanoid" id="Q9RRA9"/>
<dbReference type="OrthoDB" id="9794638at2"/>
<dbReference type="Proteomes" id="UP000002524">
    <property type="component" value="Chromosome 1"/>
</dbReference>
<dbReference type="GO" id="GO:0010181">
    <property type="term" value="F:FMN binding"/>
    <property type="evidence" value="ECO:0007669"/>
    <property type="project" value="InterPro"/>
</dbReference>
<dbReference type="GO" id="GO:0016646">
    <property type="term" value="F:oxidoreductase activity, acting on the CH-NH group of donors, NAD or NADP as acceptor"/>
    <property type="evidence" value="ECO:0007669"/>
    <property type="project" value="UniProtKB-ARBA"/>
</dbReference>
<dbReference type="Gene3D" id="2.30.110.10">
    <property type="entry name" value="Electron Transport, Fmn-binding Protein, Chain A"/>
    <property type="match status" value="1"/>
</dbReference>
<dbReference type="InterPro" id="IPR002563">
    <property type="entry name" value="Flavin_Rdtase-like_dom"/>
</dbReference>
<dbReference type="InterPro" id="IPR012349">
    <property type="entry name" value="Split_barrel_FMN-bd"/>
</dbReference>
<dbReference type="PANTHER" id="PTHR33798:SF5">
    <property type="entry name" value="FLAVIN REDUCTASE LIKE DOMAIN-CONTAINING PROTEIN"/>
    <property type="match status" value="1"/>
</dbReference>
<dbReference type="PANTHER" id="PTHR33798">
    <property type="entry name" value="FLAVOPROTEIN OXYGENASE"/>
    <property type="match status" value="1"/>
</dbReference>
<dbReference type="Pfam" id="PF01613">
    <property type="entry name" value="Flavin_Reduct"/>
    <property type="match status" value="1"/>
</dbReference>
<dbReference type="SMART" id="SM00903">
    <property type="entry name" value="Flavin_Reduct"/>
    <property type="match status" value="1"/>
</dbReference>
<dbReference type="SUPFAM" id="SSF50475">
    <property type="entry name" value="FMN-binding split barrel"/>
    <property type="match status" value="1"/>
</dbReference>
<keyword id="KW-0285">Flavoprotein</keyword>
<keyword id="KW-0288">FMN</keyword>
<keyword id="KW-1185">Reference proteome</keyword>
<protein>
    <recommendedName>
        <fullName>Uncharacterized protein DR_2585</fullName>
    </recommendedName>
</protein>
<feature type="chain" id="PRO_0000085524" description="Uncharacterized protein DR_2585">
    <location>
        <begin position="1"/>
        <end position="227"/>
    </location>
</feature>
<organism>
    <name type="scientific">Deinococcus radiodurans (strain ATCC 13939 / DSM 20539 / JCM 16871 / CCUG 27074 / LMG 4051 / NBRC 15346 / NCIMB 9279 / VKM B-1422 / R1)</name>
    <dbReference type="NCBI Taxonomy" id="243230"/>
    <lineage>
        <taxon>Bacteria</taxon>
        <taxon>Thermotogati</taxon>
        <taxon>Deinococcota</taxon>
        <taxon>Deinococci</taxon>
        <taxon>Deinococcales</taxon>
        <taxon>Deinococcaceae</taxon>
        <taxon>Deinococcus</taxon>
    </lineage>
</organism>
<gene>
    <name type="ordered locus">DR_2585</name>
</gene>
<accession>Q9RRA9</accession>
<comment type="cofactor">
    <cofactor evidence="1">
        <name>FMN</name>
        <dbReference type="ChEBI" id="CHEBI:58210"/>
    </cofactor>
</comment>
<comment type="similarity">
    <text evidence="2">Belongs to the flavoredoxin family.</text>
</comment>
<comment type="sequence caution" evidence="2">
    <conflict type="erroneous initiation">
        <sequence resource="EMBL-CDS" id="AAF12124"/>
    </conflict>
</comment>
<name>Y2585_DEIRA</name>
<evidence type="ECO:0000250" key="1"/>
<evidence type="ECO:0000305" key="2"/>
<proteinExistence type="inferred from homology"/>
<reference key="1">
    <citation type="journal article" date="1999" name="Science">
        <title>Genome sequence of the radioresistant bacterium Deinococcus radiodurans R1.</title>
        <authorList>
            <person name="White O."/>
            <person name="Eisen J.A."/>
            <person name="Heidelberg J.F."/>
            <person name="Hickey E.K."/>
            <person name="Peterson J.D."/>
            <person name="Dodson R.J."/>
            <person name="Haft D.H."/>
            <person name="Gwinn M.L."/>
            <person name="Nelson W.C."/>
            <person name="Richardson D.L."/>
            <person name="Moffat K.S."/>
            <person name="Qin H."/>
            <person name="Jiang L."/>
            <person name="Pamphile W."/>
            <person name="Crosby M."/>
            <person name="Shen M."/>
            <person name="Vamathevan J.J."/>
            <person name="Lam P."/>
            <person name="McDonald L.A."/>
            <person name="Utterback T.R."/>
            <person name="Zalewski C."/>
            <person name="Makarova K.S."/>
            <person name="Aravind L."/>
            <person name="Daly M.J."/>
            <person name="Minton K.W."/>
            <person name="Fleischmann R.D."/>
            <person name="Ketchum K.A."/>
            <person name="Nelson K.E."/>
            <person name="Salzberg S.L."/>
            <person name="Smith H.O."/>
            <person name="Venter J.C."/>
            <person name="Fraser C.M."/>
        </authorList>
    </citation>
    <scope>NUCLEOTIDE SEQUENCE [LARGE SCALE GENOMIC DNA]</scope>
    <source>
        <strain>ATCC 13939 / DSM 20539 / JCM 16871 / CCUG 27074 / LMG 4051 / NBRC 15346 / NCIMB 9279 / VKM B-1422 / R1</strain>
    </source>
</reference>